<evidence type="ECO:0000269" key="1">
    <source>
    </source>
</evidence>
<evidence type="ECO:0000269" key="2">
    <source>
    </source>
</evidence>
<evidence type="ECO:0000269" key="3">
    <source>
    </source>
</evidence>
<evidence type="ECO:0000269" key="4">
    <source>
    </source>
</evidence>
<evidence type="ECO:0000269" key="5">
    <source>
    </source>
</evidence>
<evidence type="ECO:0000269" key="6">
    <source>
    </source>
</evidence>
<evidence type="ECO:0000269" key="7">
    <source>
    </source>
</evidence>
<evidence type="ECO:0000269" key="8">
    <source ref="1"/>
</evidence>
<evidence type="ECO:0000303" key="9">
    <source>
    </source>
</evidence>
<evidence type="ECO:0000305" key="10"/>
<evidence type="ECO:0000305" key="11">
    <source>
    </source>
</evidence>
<evidence type="ECO:0000312" key="12">
    <source>
        <dbReference type="HGNC" id="HGNC:22932"/>
    </source>
</evidence>
<evidence type="ECO:0000312" key="13">
    <source>
        <dbReference type="PDB" id="7D72"/>
    </source>
</evidence>
<evidence type="ECO:0000312" key="14">
    <source>
        <dbReference type="PDB" id="7D73"/>
    </source>
</evidence>
<evidence type="ECO:0000312" key="15">
    <source>
        <dbReference type="PDB" id="7D74"/>
    </source>
</evidence>
<evidence type="ECO:0000312" key="16">
    <source>
        <dbReference type="Proteomes" id="UP000005640"/>
    </source>
</evidence>
<evidence type="ECO:0007829" key="17">
    <source>
        <dbReference type="PDB" id="7D72"/>
    </source>
</evidence>
<evidence type="ECO:0007829" key="18">
    <source>
        <dbReference type="PDB" id="7D73"/>
    </source>
</evidence>
<evidence type="ECO:0007829" key="19">
    <source>
        <dbReference type="PDB" id="7D74"/>
    </source>
</evidence>
<dbReference type="EC" id="2.7.7.13" evidence="7"/>
<dbReference type="EMBL" id="AF135421">
    <property type="protein sequence ID" value="AAD38516.1"/>
    <property type="molecule type" value="mRNA"/>
</dbReference>
<dbReference type="EMBL" id="AK024319">
    <property type="protein sequence ID" value="BAB14882.1"/>
    <property type="molecule type" value="mRNA"/>
</dbReference>
<dbReference type="EMBL" id="AK291700">
    <property type="protein sequence ID" value="BAF84389.1"/>
    <property type="molecule type" value="mRNA"/>
</dbReference>
<dbReference type="EMBL" id="AC099668">
    <property type="status" value="NOT_ANNOTATED_CDS"/>
    <property type="molecule type" value="Genomic_DNA"/>
</dbReference>
<dbReference type="EMBL" id="BC001141">
    <property type="protein sequence ID" value="AAH01141.1"/>
    <property type="molecule type" value="mRNA"/>
</dbReference>
<dbReference type="EMBL" id="BC008033">
    <property type="protein sequence ID" value="AAH08033.1"/>
    <property type="molecule type" value="mRNA"/>
</dbReference>
<dbReference type="CCDS" id="CCDS2802.1">
    <molecule id="Q9Y5P6-2"/>
</dbReference>
<dbReference type="CCDS" id="CCDS2803.1">
    <molecule id="Q9Y5P6-1"/>
</dbReference>
<dbReference type="RefSeq" id="NP_037466.2">
    <molecule id="Q9Y5P6-2"/>
    <property type="nucleotide sequence ID" value="NM_013334.3"/>
</dbReference>
<dbReference type="RefSeq" id="NP_068806.2">
    <molecule id="Q9Y5P6-1"/>
    <property type="nucleotide sequence ID" value="NM_021971.4"/>
</dbReference>
<dbReference type="PDB" id="7D72">
    <property type="method" value="EM"/>
    <property type="resolution" value="3.40 A"/>
    <property type="chains" value="E/F/G/H/I/J/K/L=1-360"/>
</dbReference>
<dbReference type="PDB" id="7D73">
    <property type="method" value="EM"/>
    <property type="resolution" value="3.00 A"/>
    <property type="chains" value="E/F/G/H/I/J/K/L=1-360"/>
</dbReference>
<dbReference type="PDB" id="7D74">
    <property type="method" value="EM"/>
    <property type="resolution" value="3.10 A"/>
    <property type="chains" value="E/F/G/H/I/J/K/L=1-360"/>
</dbReference>
<dbReference type="PDBsum" id="7D72"/>
<dbReference type="PDBsum" id="7D73"/>
<dbReference type="PDBsum" id="7D74"/>
<dbReference type="EMDB" id="EMD-30599"/>
<dbReference type="EMDB" id="EMD-30600"/>
<dbReference type="EMDB" id="EMD-30601"/>
<dbReference type="SMR" id="Q9Y5P6"/>
<dbReference type="BioGRID" id="118966">
    <property type="interactions" value="78"/>
</dbReference>
<dbReference type="ComplexPortal" id="CPX-2234">
    <property type="entry name" value="Mannose-1-phosphate guanyltransferase complex"/>
</dbReference>
<dbReference type="FunCoup" id="Q9Y5P6">
    <property type="interactions" value="961"/>
</dbReference>
<dbReference type="IntAct" id="Q9Y5P6">
    <property type="interactions" value="25"/>
</dbReference>
<dbReference type="STRING" id="9606.ENSP00000309092"/>
<dbReference type="GlyGen" id="Q9Y5P6">
    <property type="glycosylation" value="1 site, 1 O-linked glycan (1 site)"/>
</dbReference>
<dbReference type="iPTMnet" id="Q9Y5P6"/>
<dbReference type="MetOSite" id="Q9Y5P6"/>
<dbReference type="PhosphoSitePlus" id="Q9Y5P6"/>
<dbReference type="BioMuta" id="GMPPB"/>
<dbReference type="DMDM" id="160013885"/>
<dbReference type="jPOST" id="Q9Y5P6"/>
<dbReference type="MassIVE" id="Q9Y5P6"/>
<dbReference type="PaxDb" id="9606-ENSP00000309092"/>
<dbReference type="PeptideAtlas" id="Q9Y5P6"/>
<dbReference type="ProteomicsDB" id="86466">
    <molecule id="Q9Y5P6-1"/>
</dbReference>
<dbReference type="ProteomicsDB" id="86467">
    <molecule id="Q9Y5P6-2"/>
</dbReference>
<dbReference type="Pumba" id="Q9Y5P6"/>
<dbReference type="Antibodypedia" id="1597">
    <property type="antibodies" value="170 antibodies from 25 providers"/>
</dbReference>
<dbReference type="DNASU" id="29925"/>
<dbReference type="Ensembl" id="ENST00000308375.10">
    <molecule id="Q9Y5P6-2"/>
    <property type="protein sequence ID" value="ENSP00000309092.6"/>
    <property type="gene ID" value="ENSG00000173540.14"/>
</dbReference>
<dbReference type="Ensembl" id="ENST00000308388.7">
    <molecule id="Q9Y5P6-1"/>
    <property type="protein sequence ID" value="ENSP00000311130.6"/>
    <property type="gene ID" value="ENSG00000173540.14"/>
</dbReference>
<dbReference type="Ensembl" id="ENST00000480687.5">
    <molecule id="Q9Y5P6-1"/>
    <property type="protein sequence ID" value="ENSP00000418565.1"/>
    <property type="gene ID" value="ENSG00000173540.14"/>
</dbReference>
<dbReference type="GeneID" id="29925"/>
<dbReference type="KEGG" id="hsa:29925"/>
<dbReference type="MANE-Select" id="ENST00000308388.7">
    <property type="protein sequence ID" value="ENSP00000311130.6"/>
    <property type="RefSeq nucleotide sequence ID" value="NM_021971.4"/>
    <property type="RefSeq protein sequence ID" value="NP_068806.2"/>
</dbReference>
<dbReference type="UCSC" id="uc003cxk.3">
    <molecule id="Q9Y5P6-1"/>
    <property type="organism name" value="human"/>
</dbReference>
<dbReference type="AGR" id="HGNC:22932"/>
<dbReference type="CTD" id="29925"/>
<dbReference type="DisGeNET" id="29925"/>
<dbReference type="GeneCards" id="GMPPB"/>
<dbReference type="GeneReviews" id="GMPPB"/>
<dbReference type="HGNC" id="HGNC:22932">
    <property type="gene designation" value="GMPPB"/>
</dbReference>
<dbReference type="HPA" id="ENSG00000173540">
    <property type="expression patterns" value="Low tissue specificity"/>
</dbReference>
<dbReference type="MalaCards" id="GMPPB"/>
<dbReference type="MIM" id="615320">
    <property type="type" value="gene"/>
</dbReference>
<dbReference type="MIM" id="615350">
    <property type="type" value="phenotype"/>
</dbReference>
<dbReference type="MIM" id="615351">
    <property type="type" value="phenotype"/>
</dbReference>
<dbReference type="MIM" id="615352">
    <property type="type" value="phenotype"/>
</dbReference>
<dbReference type="neXtProt" id="NX_Q9Y5P6"/>
<dbReference type="OpenTargets" id="ENSG00000173540"/>
<dbReference type="Orphanet" id="370959">
    <property type="disease" value="Congenital muscular dystrophy with cerebellar involvement"/>
</dbReference>
<dbReference type="Orphanet" id="370968">
    <property type="disease" value="Congenital muscular dystrophy with intellectual disability"/>
</dbReference>
<dbReference type="Orphanet" id="353327">
    <property type="disease" value="Congenital myasthenic syndromes with glycosylation defect"/>
</dbReference>
<dbReference type="Orphanet" id="363623">
    <property type="disease" value="GMPPB-related limb-girdle muscular dystrophy R19"/>
</dbReference>
<dbReference type="Orphanet" id="588">
    <property type="disease" value="Muscle-eye-brain disease"/>
</dbReference>
<dbReference type="PharmGKB" id="PA134875590"/>
<dbReference type="VEuPathDB" id="HostDB:ENSG00000173540"/>
<dbReference type="eggNOG" id="KOG1322">
    <property type="taxonomic scope" value="Eukaryota"/>
</dbReference>
<dbReference type="GeneTree" id="ENSGT00940000158909"/>
<dbReference type="HOGENOM" id="CLU_029499_0_0_1"/>
<dbReference type="InParanoid" id="Q9Y5P6"/>
<dbReference type="OMA" id="GPNCWIC"/>
<dbReference type="OrthoDB" id="1733332at2759"/>
<dbReference type="PAN-GO" id="Q9Y5P6">
    <property type="GO annotations" value="5 GO annotations based on evolutionary models"/>
</dbReference>
<dbReference type="PhylomeDB" id="Q9Y5P6"/>
<dbReference type="TreeFam" id="TF300718"/>
<dbReference type="BRENDA" id="2.7.7.13">
    <property type="organism ID" value="2681"/>
</dbReference>
<dbReference type="PathwayCommons" id="Q9Y5P6"/>
<dbReference type="Reactome" id="R-HSA-446205">
    <property type="pathway name" value="Synthesis of GDP-mannose"/>
</dbReference>
<dbReference type="SignaLink" id="Q9Y5P6"/>
<dbReference type="UniPathway" id="UPA00126">
    <property type="reaction ID" value="UER00930"/>
</dbReference>
<dbReference type="BioGRID-ORCS" id="29925">
    <property type="hits" value="729 hits in 1175 CRISPR screens"/>
</dbReference>
<dbReference type="ChiTaRS" id="GMPPB">
    <property type="organism name" value="human"/>
</dbReference>
<dbReference type="GeneWiki" id="GMPPB"/>
<dbReference type="GenomeRNAi" id="29925"/>
<dbReference type="Pharos" id="Q9Y5P6">
    <property type="development level" value="Tbio"/>
</dbReference>
<dbReference type="PRO" id="PR:Q9Y5P6"/>
<dbReference type="Proteomes" id="UP000005640">
    <property type="component" value="Chromosome 3"/>
</dbReference>
<dbReference type="RNAct" id="Q9Y5P6">
    <property type="molecule type" value="protein"/>
</dbReference>
<dbReference type="Bgee" id="ENSG00000173540">
    <property type="expression patterns" value="Expressed in body of pancreas and 108 other cell types or tissues"/>
</dbReference>
<dbReference type="ExpressionAtlas" id="Q9Y5P6">
    <property type="expression patterns" value="baseline and differential"/>
</dbReference>
<dbReference type="GO" id="GO:0005737">
    <property type="term" value="C:cytoplasm"/>
    <property type="evidence" value="ECO:0000314"/>
    <property type="project" value="UniProtKB"/>
</dbReference>
<dbReference type="GO" id="GO:0005829">
    <property type="term" value="C:cytosol"/>
    <property type="evidence" value="ECO:0000304"/>
    <property type="project" value="Reactome"/>
</dbReference>
<dbReference type="GO" id="GO:0120508">
    <property type="term" value="C:GDP-mannose pyrophosphorylase complex"/>
    <property type="evidence" value="ECO:0000314"/>
    <property type="project" value="FlyBase"/>
</dbReference>
<dbReference type="GO" id="GO:0005525">
    <property type="term" value="F:GTP binding"/>
    <property type="evidence" value="ECO:0007669"/>
    <property type="project" value="UniProtKB-KW"/>
</dbReference>
<dbReference type="GO" id="GO:0004475">
    <property type="term" value="F:mannose-1-phosphate guanylyltransferase (GTP) activity"/>
    <property type="evidence" value="ECO:0000314"/>
    <property type="project" value="FlyBase"/>
</dbReference>
<dbReference type="GO" id="GO:0046872">
    <property type="term" value="F:metal ion binding"/>
    <property type="evidence" value="ECO:0007669"/>
    <property type="project" value="UniProtKB-KW"/>
</dbReference>
<dbReference type="GO" id="GO:0009298">
    <property type="term" value="P:GDP-mannose biosynthetic process"/>
    <property type="evidence" value="ECO:0000315"/>
    <property type="project" value="UniProtKB"/>
</dbReference>
<dbReference type="GO" id="GO:0061728">
    <property type="term" value="P:GDP-mannose biosynthetic process from mannose"/>
    <property type="evidence" value="ECO:0007669"/>
    <property type="project" value="Ensembl"/>
</dbReference>
<dbReference type="GO" id="GO:0019673">
    <property type="term" value="P:GDP-mannose metabolic process"/>
    <property type="evidence" value="ECO:0000314"/>
    <property type="project" value="FlyBase"/>
</dbReference>
<dbReference type="GO" id="GO:0006486">
    <property type="term" value="P:protein glycosylation"/>
    <property type="evidence" value="ECO:0000318"/>
    <property type="project" value="GO_Central"/>
</dbReference>
<dbReference type="CDD" id="cd06425">
    <property type="entry name" value="M1P_guanylylT_B_like_N"/>
    <property type="match status" value="1"/>
</dbReference>
<dbReference type="FunFam" id="2.160.10.10:FF:000018">
    <property type="entry name" value="Mannose-1-phosphate guanyltransferase beta"/>
    <property type="match status" value="1"/>
</dbReference>
<dbReference type="FunFam" id="3.90.550.10:FF:000013">
    <property type="entry name" value="mannose-1-phosphate guanyltransferase beta"/>
    <property type="match status" value="1"/>
</dbReference>
<dbReference type="Gene3D" id="2.160.10.10">
    <property type="entry name" value="Hexapeptide repeat proteins"/>
    <property type="match status" value="1"/>
</dbReference>
<dbReference type="Gene3D" id="3.90.550.10">
    <property type="entry name" value="Spore Coat Polysaccharide Biosynthesis Protein SpsA, Chain A"/>
    <property type="match status" value="1"/>
</dbReference>
<dbReference type="InterPro" id="IPR056729">
    <property type="entry name" value="GMPPB_C"/>
</dbReference>
<dbReference type="InterPro" id="IPR045233">
    <property type="entry name" value="GMPPB_N"/>
</dbReference>
<dbReference type="InterPro" id="IPR018357">
    <property type="entry name" value="Hexapep_transf_CS"/>
</dbReference>
<dbReference type="InterPro" id="IPR050486">
    <property type="entry name" value="Mannose-1P_guanyltransferase"/>
</dbReference>
<dbReference type="InterPro" id="IPR005835">
    <property type="entry name" value="NTP_transferase_dom"/>
</dbReference>
<dbReference type="InterPro" id="IPR029044">
    <property type="entry name" value="Nucleotide-diphossugar_trans"/>
</dbReference>
<dbReference type="PANTHER" id="PTHR22572">
    <property type="entry name" value="SUGAR-1-PHOSPHATE GUANYL TRANSFERASE"/>
    <property type="match status" value="1"/>
</dbReference>
<dbReference type="Pfam" id="PF25087">
    <property type="entry name" value="GMPPB_C"/>
    <property type="match status" value="1"/>
</dbReference>
<dbReference type="Pfam" id="PF00483">
    <property type="entry name" value="NTP_transferase"/>
    <property type="match status" value="1"/>
</dbReference>
<dbReference type="SUPFAM" id="SSF53448">
    <property type="entry name" value="Nucleotide-diphospho-sugar transferases"/>
    <property type="match status" value="1"/>
</dbReference>
<dbReference type="PROSITE" id="PS00101">
    <property type="entry name" value="HEXAPEP_TRANSFERASES"/>
    <property type="match status" value="1"/>
</dbReference>
<name>GMPPB_HUMAN</name>
<gene>
    <name evidence="12" type="primary">GMPPB</name>
</gene>
<reference key="1">
    <citation type="submission" date="1999-03" db="EMBL/GenBank/DDBJ databases">
        <title>Human homolog of GDP-mannose pyrophosphorylase.</title>
        <authorList>
            <person name="Matthijs G."/>
            <person name="Schollen E."/>
            <person name="Dierickx D."/>
        </authorList>
    </citation>
    <scope>NUCLEOTIDE SEQUENCE [MRNA] (ISOFORM 1)</scope>
    <scope>VARIANT ARG-184</scope>
</reference>
<reference key="2">
    <citation type="journal article" date="2004" name="Nat. Genet.">
        <title>Complete sequencing and characterization of 21,243 full-length human cDNAs.</title>
        <authorList>
            <person name="Ota T."/>
            <person name="Suzuki Y."/>
            <person name="Nishikawa T."/>
            <person name="Otsuki T."/>
            <person name="Sugiyama T."/>
            <person name="Irie R."/>
            <person name="Wakamatsu A."/>
            <person name="Hayashi K."/>
            <person name="Sato H."/>
            <person name="Nagai K."/>
            <person name="Kimura K."/>
            <person name="Makita H."/>
            <person name="Sekine M."/>
            <person name="Obayashi M."/>
            <person name="Nishi T."/>
            <person name="Shibahara T."/>
            <person name="Tanaka T."/>
            <person name="Ishii S."/>
            <person name="Yamamoto J."/>
            <person name="Saito K."/>
            <person name="Kawai Y."/>
            <person name="Isono Y."/>
            <person name="Nakamura Y."/>
            <person name="Nagahari K."/>
            <person name="Murakami K."/>
            <person name="Yasuda T."/>
            <person name="Iwayanagi T."/>
            <person name="Wagatsuma M."/>
            <person name="Shiratori A."/>
            <person name="Sudo H."/>
            <person name="Hosoiri T."/>
            <person name="Kaku Y."/>
            <person name="Kodaira H."/>
            <person name="Kondo H."/>
            <person name="Sugawara M."/>
            <person name="Takahashi M."/>
            <person name="Kanda K."/>
            <person name="Yokoi T."/>
            <person name="Furuya T."/>
            <person name="Kikkawa E."/>
            <person name="Omura Y."/>
            <person name="Abe K."/>
            <person name="Kamihara K."/>
            <person name="Katsuta N."/>
            <person name="Sato K."/>
            <person name="Tanikawa M."/>
            <person name="Yamazaki M."/>
            <person name="Ninomiya K."/>
            <person name="Ishibashi T."/>
            <person name="Yamashita H."/>
            <person name="Murakawa K."/>
            <person name="Fujimori K."/>
            <person name="Tanai H."/>
            <person name="Kimata M."/>
            <person name="Watanabe M."/>
            <person name="Hiraoka S."/>
            <person name="Chiba Y."/>
            <person name="Ishida S."/>
            <person name="Ono Y."/>
            <person name="Takiguchi S."/>
            <person name="Watanabe S."/>
            <person name="Yosida M."/>
            <person name="Hotuta T."/>
            <person name="Kusano J."/>
            <person name="Kanehori K."/>
            <person name="Takahashi-Fujii A."/>
            <person name="Hara H."/>
            <person name="Tanase T.-O."/>
            <person name="Nomura Y."/>
            <person name="Togiya S."/>
            <person name="Komai F."/>
            <person name="Hara R."/>
            <person name="Takeuchi K."/>
            <person name="Arita M."/>
            <person name="Imose N."/>
            <person name="Musashino K."/>
            <person name="Yuuki H."/>
            <person name="Oshima A."/>
            <person name="Sasaki N."/>
            <person name="Aotsuka S."/>
            <person name="Yoshikawa Y."/>
            <person name="Matsunawa H."/>
            <person name="Ichihara T."/>
            <person name="Shiohata N."/>
            <person name="Sano S."/>
            <person name="Moriya S."/>
            <person name="Momiyama H."/>
            <person name="Satoh N."/>
            <person name="Takami S."/>
            <person name="Terashima Y."/>
            <person name="Suzuki O."/>
            <person name="Nakagawa S."/>
            <person name="Senoh A."/>
            <person name="Mizoguchi H."/>
            <person name="Goto Y."/>
            <person name="Shimizu F."/>
            <person name="Wakebe H."/>
            <person name="Hishigaki H."/>
            <person name="Watanabe T."/>
            <person name="Sugiyama A."/>
            <person name="Takemoto M."/>
            <person name="Kawakami B."/>
            <person name="Yamazaki M."/>
            <person name="Watanabe K."/>
            <person name="Kumagai A."/>
            <person name="Itakura S."/>
            <person name="Fukuzumi Y."/>
            <person name="Fujimori Y."/>
            <person name="Komiyama M."/>
            <person name="Tashiro H."/>
            <person name="Tanigami A."/>
            <person name="Fujiwara T."/>
            <person name="Ono T."/>
            <person name="Yamada K."/>
            <person name="Fujii Y."/>
            <person name="Ozaki K."/>
            <person name="Hirao M."/>
            <person name="Ohmori Y."/>
            <person name="Kawabata A."/>
            <person name="Hikiji T."/>
            <person name="Kobatake N."/>
            <person name="Inagaki H."/>
            <person name="Ikema Y."/>
            <person name="Okamoto S."/>
            <person name="Okitani R."/>
            <person name="Kawakami T."/>
            <person name="Noguchi S."/>
            <person name="Itoh T."/>
            <person name="Shigeta K."/>
            <person name="Senba T."/>
            <person name="Matsumura K."/>
            <person name="Nakajima Y."/>
            <person name="Mizuno T."/>
            <person name="Morinaga M."/>
            <person name="Sasaki M."/>
            <person name="Togashi T."/>
            <person name="Oyama M."/>
            <person name="Hata H."/>
            <person name="Watanabe M."/>
            <person name="Komatsu T."/>
            <person name="Mizushima-Sugano J."/>
            <person name="Satoh T."/>
            <person name="Shirai Y."/>
            <person name="Takahashi Y."/>
            <person name="Nakagawa K."/>
            <person name="Okumura K."/>
            <person name="Nagase T."/>
            <person name="Nomura N."/>
            <person name="Kikuchi H."/>
            <person name="Masuho Y."/>
            <person name="Yamashita R."/>
            <person name="Nakai K."/>
            <person name="Yada T."/>
            <person name="Nakamura Y."/>
            <person name="Ohara O."/>
            <person name="Isogai T."/>
            <person name="Sugano S."/>
        </authorList>
    </citation>
    <scope>NUCLEOTIDE SEQUENCE [LARGE SCALE MRNA] (ISOFORMS 1 AND 2)</scope>
    <scope>VARIANT ARG-184</scope>
    <source>
        <tissue>Placenta</tissue>
    </source>
</reference>
<reference key="3">
    <citation type="journal article" date="2006" name="Nature">
        <title>The DNA sequence, annotation and analysis of human chromosome 3.</title>
        <authorList>
            <person name="Muzny D.M."/>
            <person name="Scherer S.E."/>
            <person name="Kaul R."/>
            <person name="Wang J."/>
            <person name="Yu J."/>
            <person name="Sudbrak R."/>
            <person name="Buhay C.J."/>
            <person name="Chen R."/>
            <person name="Cree A."/>
            <person name="Ding Y."/>
            <person name="Dugan-Rocha S."/>
            <person name="Gill R."/>
            <person name="Gunaratne P."/>
            <person name="Harris R.A."/>
            <person name="Hawes A.C."/>
            <person name="Hernandez J."/>
            <person name="Hodgson A.V."/>
            <person name="Hume J."/>
            <person name="Jackson A."/>
            <person name="Khan Z.M."/>
            <person name="Kovar-Smith C."/>
            <person name="Lewis L.R."/>
            <person name="Lozado R.J."/>
            <person name="Metzker M.L."/>
            <person name="Milosavljevic A."/>
            <person name="Miner G.R."/>
            <person name="Morgan M.B."/>
            <person name="Nazareth L.V."/>
            <person name="Scott G."/>
            <person name="Sodergren E."/>
            <person name="Song X.-Z."/>
            <person name="Steffen D."/>
            <person name="Wei S."/>
            <person name="Wheeler D.A."/>
            <person name="Wright M.W."/>
            <person name="Worley K.C."/>
            <person name="Yuan Y."/>
            <person name="Zhang Z."/>
            <person name="Adams C.Q."/>
            <person name="Ansari-Lari M.A."/>
            <person name="Ayele M."/>
            <person name="Brown M.J."/>
            <person name="Chen G."/>
            <person name="Chen Z."/>
            <person name="Clendenning J."/>
            <person name="Clerc-Blankenburg K.P."/>
            <person name="Chen R."/>
            <person name="Chen Z."/>
            <person name="Davis C."/>
            <person name="Delgado O."/>
            <person name="Dinh H.H."/>
            <person name="Dong W."/>
            <person name="Draper H."/>
            <person name="Ernst S."/>
            <person name="Fu G."/>
            <person name="Gonzalez-Garay M.L."/>
            <person name="Garcia D.K."/>
            <person name="Gillett W."/>
            <person name="Gu J."/>
            <person name="Hao B."/>
            <person name="Haugen E."/>
            <person name="Havlak P."/>
            <person name="He X."/>
            <person name="Hennig S."/>
            <person name="Hu S."/>
            <person name="Huang W."/>
            <person name="Jackson L.R."/>
            <person name="Jacob L.S."/>
            <person name="Kelly S.H."/>
            <person name="Kube M."/>
            <person name="Levy R."/>
            <person name="Li Z."/>
            <person name="Liu B."/>
            <person name="Liu J."/>
            <person name="Liu W."/>
            <person name="Lu J."/>
            <person name="Maheshwari M."/>
            <person name="Nguyen B.-V."/>
            <person name="Okwuonu G.O."/>
            <person name="Palmeiri A."/>
            <person name="Pasternak S."/>
            <person name="Perez L.M."/>
            <person name="Phelps K.A."/>
            <person name="Plopper F.J."/>
            <person name="Qiang B."/>
            <person name="Raymond C."/>
            <person name="Rodriguez R."/>
            <person name="Saenphimmachak C."/>
            <person name="Santibanez J."/>
            <person name="Shen H."/>
            <person name="Shen Y."/>
            <person name="Subramanian S."/>
            <person name="Tabor P.E."/>
            <person name="Verduzco D."/>
            <person name="Waldron L."/>
            <person name="Wang J."/>
            <person name="Wang J."/>
            <person name="Wang Q."/>
            <person name="Williams G.A."/>
            <person name="Wong G.K.-S."/>
            <person name="Yao Z."/>
            <person name="Zhang J."/>
            <person name="Zhang X."/>
            <person name="Zhao G."/>
            <person name="Zhou J."/>
            <person name="Zhou Y."/>
            <person name="Nelson D."/>
            <person name="Lehrach H."/>
            <person name="Reinhardt R."/>
            <person name="Naylor S.L."/>
            <person name="Yang H."/>
            <person name="Olson M."/>
            <person name="Weinstock G."/>
            <person name="Gibbs R.A."/>
        </authorList>
    </citation>
    <scope>NUCLEOTIDE SEQUENCE [LARGE SCALE GENOMIC DNA]</scope>
</reference>
<reference key="4">
    <citation type="journal article" date="2004" name="Genome Res.">
        <title>The status, quality, and expansion of the NIH full-length cDNA project: the Mammalian Gene Collection (MGC).</title>
        <authorList>
            <consortium name="The MGC Project Team"/>
        </authorList>
    </citation>
    <scope>NUCLEOTIDE SEQUENCE [LARGE SCALE MRNA] (ISOFORM 1)</scope>
    <scope>VARIANT ARG-184</scope>
    <source>
        <tissue>Brain</tissue>
        <tissue>Eye</tissue>
    </source>
</reference>
<reference key="5">
    <citation type="journal article" date="2011" name="BMC Syst. Biol.">
        <title>Initial characterization of the human central proteome.</title>
        <authorList>
            <person name="Burkard T.R."/>
            <person name="Planyavsky M."/>
            <person name="Kaupe I."/>
            <person name="Breitwieser F.P."/>
            <person name="Buerckstuemmer T."/>
            <person name="Bennett K.L."/>
            <person name="Superti-Furga G."/>
            <person name="Colinge J."/>
        </authorList>
    </citation>
    <scope>IDENTIFICATION BY MASS SPECTROMETRY [LARGE SCALE ANALYSIS]</scope>
</reference>
<reference key="6">
    <citation type="journal article" date="2012" name="Proc. Natl. Acad. Sci. U.S.A.">
        <title>N-terminal acetylome analyses and functional insights of the N-terminal acetyltransferase NatB.</title>
        <authorList>
            <person name="Van Damme P."/>
            <person name="Lasa M."/>
            <person name="Polevoda B."/>
            <person name="Gazquez C."/>
            <person name="Elosegui-Artola A."/>
            <person name="Kim D.S."/>
            <person name="De Juan-Pardo E."/>
            <person name="Demeyer K."/>
            <person name="Hole K."/>
            <person name="Larrea E."/>
            <person name="Timmerman E."/>
            <person name="Prieto J."/>
            <person name="Arnesen T."/>
            <person name="Sherman F."/>
            <person name="Gevaert K."/>
            <person name="Aldabe R."/>
        </authorList>
    </citation>
    <scope>IDENTIFICATION BY MASS SPECTROMETRY [LARGE SCALE ANALYSIS]</scope>
</reference>
<reference key="7">
    <citation type="journal article" date="2014" name="J. Proteomics">
        <title>An enzyme assisted RP-RPLC approach for in-depth analysis of human liver phosphoproteome.</title>
        <authorList>
            <person name="Bian Y."/>
            <person name="Song C."/>
            <person name="Cheng K."/>
            <person name="Dong M."/>
            <person name="Wang F."/>
            <person name="Huang J."/>
            <person name="Sun D."/>
            <person name="Wang L."/>
            <person name="Ye M."/>
            <person name="Zou H."/>
        </authorList>
    </citation>
    <scope>IDENTIFICATION BY MASS SPECTROMETRY [LARGE SCALE ANALYSIS]</scope>
    <source>
        <tissue>Liver</tissue>
    </source>
</reference>
<reference evidence="13 14 15" key="8">
    <citation type="journal article" date="2021" name="Nat. Struct. Mol. Biol.">
        <title>Cryo-EM structures of human GMPPA-GMPPB complex reveal how cells maintain GDP-mannose homeostasis.</title>
        <authorList>
            <person name="Zheng L."/>
            <person name="Liu Z."/>
            <person name="Wang Y."/>
            <person name="Yang F."/>
            <person name="Wang J."/>
            <person name="Huang W."/>
            <person name="Qin J."/>
            <person name="Tian M."/>
            <person name="Cai X."/>
            <person name="Liu X."/>
            <person name="Mo X."/>
            <person name="Gao N."/>
            <person name="Jia D."/>
        </authorList>
    </citation>
    <scope>STRUCTURE BY ELECTRON MICROSCOPY (3.0 ANGSTROMS) OF 1-420 IN COMPLEXES WITH GMPPB; MG2+; GTP AND GDP-MANNOSE</scope>
    <scope>FUNCTION</scope>
    <scope>CATALYTIC ACTIVITY</scope>
    <scope>COFACTOR MG</scope>
    <scope>ACTIVITY REGULATION</scope>
    <scope>BIOPHYSICOCHEMICAL PROPERTIES</scope>
    <scope>PATHWAY</scope>
    <scope>SUBUNIT</scope>
    <scope>DOMAIN</scope>
    <scope>ACTIVE SITE</scope>
    <scope>CHARACTERIZATION OF VARIANT MDDGA14 ASN-334</scope>
    <scope>CHARACTERIZATION OF VARIANT MDDGB14 LEU-32</scope>
    <scope>CHARACTERIZATION OF VARIANT MDDGC14 SER-22; HIS-27; THR-219; TRP-293 AND HIS-357</scope>
    <scope>MUTAGENESIS OF ILE-193; ASP-218; CYS-266; ARG-287; LEU-303; GLU-335; 344-LEU--LYS-347 AND 358-ILE--MET-360</scope>
</reference>
<reference key="9">
    <citation type="journal article" date="2013" name="Am. J. Hum. Genet.">
        <title>Mutations in GDP-mannose pyrophosphorylase B cause congenital and limb-girdle muscular dystrophies associated with hypoglycosylation of alpha-dystroglycan.</title>
        <authorList>
            <consortium name="UK10K Consortium"/>
            <person name="Carss K.J."/>
            <person name="Stevens E."/>
            <person name="Foley A.R."/>
            <person name="Cirak S."/>
            <person name="Riemersma M."/>
            <person name="Torelli S."/>
            <person name="Hoischen A."/>
            <person name="Willer T."/>
            <person name="van Scherpenzeel M."/>
            <person name="Moore S.A."/>
            <person name="Messina S."/>
            <person name="Bertini E."/>
            <person name="Boennemann C.G."/>
            <person name="Abdenur J.E."/>
            <person name="Grosmann C.M."/>
            <person name="Kesari A."/>
            <person name="Punetha J."/>
            <person name="Quinlivan R."/>
            <person name="Waddell L.B."/>
            <person name="Young H.K."/>
            <person name="Wraige E."/>
            <person name="Yau S."/>
            <person name="Brodd L."/>
            <person name="Feng L."/>
            <person name="Sewry C."/>
            <person name="MacArthur D.G."/>
            <person name="North K.N."/>
            <person name="Hoffman E."/>
            <person name="Stemple D.L."/>
            <person name="Hurles M.E."/>
            <person name="van Bokhoven H."/>
            <person name="Campbell K.P."/>
            <person name="Lefeber D.J."/>
            <person name="Lin Y.Y."/>
            <person name="Muntoni F."/>
        </authorList>
    </citation>
    <scope>SUBCELLULAR LOCATION</scope>
    <scope>TISSUE SPECIFICITY (ISOFORMS 1 AND 2)</scope>
    <scope>DEVELOPMENTAL STAGE (ISOFORM 2)</scope>
    <scope>VARIANT MDDGA14 ASN-334</scope>
    <scope>VARIANTS MDDGB14 LEU-32; CYS-185 AND GLN-287</scope>
    <scope>VARIANTS MDDGC14 SER-22; HIS-27 AND ILE-330</scope>
    <scope>CHARACTERIZATION OF VARIANT MDDGA14 ASN-334</scope>
    <scope>CHARACTERIZATION OF VARIANTS MDDGB14 LEU-32; CYS-185 AND GLN-287</scope>
    <scope>CHARACTERIZATION OF VARIANTS MDDGC14 SER-22; HIS-27 AND ILE-330</scope>
</reference>
<reference key="10">
    <citation type="journal article" date="2015" name="Hum. Mutat.">
        <title>GMPPB-associated dystroglycanopathy: Emerging common variants with phenotype correlation.</title>
        <authorList>
            <person name="Jensen B.S."/>
            <person name="Willer T."/>
            <person name="Saade D.N."/>
            <person name="Cox M.O."/>
            <person name="Mozaffar T."/>
            <person name="Scavina M."/>
            <person name="Stefans V.A."/>
            <person name="Winder T.L."/>
            <person name="Campbell K.P."/>
            <person name="Moore S.A."/>
            <person name="Mathews K.D."/>
        </authorList>
    </citation>
    <scope>VARIANTS MDDGC14 HIS-27; SER-32; CYS-132; THR-219; SER-241; MET-254; GLN-287; TRP-287; ALA-318 AND ILE-330</scope>
</reference>
<reference key="11">
    <citation type="journal article" date="2017" name="Neuromuscul. Disord.">
        <title>Novel mutations in the C-terminal region of GMPPB causing limb-girdle muscular dystrophy overlapping with congenital syndrome.</title>
        <authorList>
            <person name="Luo S."/>
            <person name="Cai S."/>
            <person name="Maxwell S."/>
            <person name="Yue D."/>
            <person name="Zhu W."/>
            <person name="Qiao K."/>
            <person name="Zhu Z."/>
            <person name="Zhou L."/>
            <person name="Xi J."/>
            <person name="Lu J."/>
            <person name="Beeson D."/>
            <person name="Zhao C."/>
        </authorList>
    </citation>
    <scope>VARIANTS MDDGC14 TRP-293; LYS-322; ARG-340 AND HIS-357</scope>
    <scope>CHARACTERIZATION OF VARIANTS MDDGC14 TRP-293; LYS-322; ARG-340 AND HIS-357</scope>
</reference>
<reference key="12">
    <citation type="journal article" date="2017" name="Neuromuscul. Disord.">
        <title>Late-onset limb-girdle muscular dystrophy caused by GMPPB mutations.</title>
        <authorList>
            <person name="Balcin H."/>
            <person name="Palmio J."/>
            <person name="Penttilae S."/>
            <person name="Nennesmo I."/>
            <person name="Lindfors M."/>
            <person name="Solders G."/>
            <person name="Udd B."/>
        </authorList>
    </citation>
    <scope>VARIANTS MDDGC14 HIS-27 AND TRP-287</scope>
</reference>
<organism evidence="16">
    <name type="scientific">Homo sapiens</name>
    <name type="common">Human</name>
    <dbReference type="NCBI Taxonomy" id="9606"/>
    <lineage>
        <taxon>Eukaryota</taxon>
        <taxon>Metazoa</taxon>
        <taxon>Chordata</taxon>
        <taxon>Craniata</taxon>
        <taxon>Vertebrata</taxon>
        <taxon>Euteleostomi</taxon>
        <taxon>Mammalia</taxon>
        <taxon>Eutheria</taxon>
        <taxon>Euarchontoglires</taxon>
        <taxon>Primates</taxon>
        <taxon>Haplorrhini</taxon>
        <taxon>Catarrhini</taxon>
        <taxon>Hominidae</taxon>
        <taxon>Homo</taxon>
    </lineage>
</organism>
<sequence>MKALILVGGYGTRLRPLTLSTPKPLVDFCNKPILLHQVEALAAAGVDHVILAVSYMSQVLEKEMKAQEQRLGIRISMSHEEEPLGTAGPLALARDLLSETADPFFVLNSDVICDFPFQAMVQFHRHHGQEGSILVTKVEEPSKYGVVVCEADTGRIHRFVEKPQVFVSNKINAGMYILSPAVLQRIQLQPTSIEKEVFPIMAKEGQLYAMELQGFWMDIGQPKDFLTGMCLFLQSLRQKQPERLCSGPGIVGNVLVDPSARIGQNCSIGPNVSLGPGVVVEDGVCIRRCTVLRDARIRSHSWLESCIVGWRCRVGQWVRMENVTVLGEDVIVNDELYLNGASVLPHKSIGESVPEPRIIM</sequence>
<feature type="chain" id="PRO_0000307162" description="Mannose-1-phosphate guanylyltransferase catalytic subunit beta">
    <location>
        <begin position="1"/>
        <end position="360"/>
    </location>
</feature>
<feature type="region of interest" description="Substrate-binding domain" evidence="7">
    <location>
        <begin position="2"/>
        <end position="222"/>
    </location>
</feature>
<feature type="region of interest" description="Hexapeptide repeat domain" evidence="7">
    <location>
        <begin position="245"/>
        <end position="360"/>
    </location>
</feature>
<feature type="active site" evidence="11">
    <location>
        <position position="162"/>
    </location>
</feature>
<feature type="binding site" evidence="7">
    <location>
        <position position="110"/>
    </location>
    <ligand>
        <name>GDP-alpha-D-mannose</name>
        <dbReference type="ChEBI" id="CHEBI:57527"/>
    </ligand>
</feature>
<feature type="binding site" evidence="7">
    <location>
        <position position="110"/>
    </location>
    <ligand>
        <name>Mg(2+)</name>
        <dbReference type="ChEBI" id="CHEBI:18420"/>
    </ligand>
</feature>
<feature type="binding site" evidence="7">
    <location>
        <position position="218"/>
    </location>
    <ligand>
        <name>GDP-alpha-D-mannose</name>
        <dbReference type="ChEBI" id="CHEBI:57527"/>
    </ligand>
</feature>
<feature type="binding site" evidence="7">
    <location>
        <position position="218"/>
    </location>
    <ligand>
        <name>Mg(2+)</name>
        <dbReference type="ChEBI" id="CHEBI:18420"/>
    </ligand>
</feature>
<feature type="splice variant" id="VSP_028619" description="In isoform 2." evidence="9">
    <original>W</original>
    <variation>WVSLWAGLGGERGGECACLPDKAYPLLE</variation>
    <location>
        <position position="317"/>
    </location>
</feature>
<feature type="sequence variant" id="VAR_070142" description="In MDDGC14; causes protein aggregation; reduces catalytic activity; dbSNP:rs397509424." evidence="3 4 6 7">
    <original>P</original>
    <variation>S</variation>
    <location>
        <position position="22"/>
    </location>
</feature>
<feature type="sequence variant" id="VAR_070143" description="In MDDGC14; the protein remains distributed in the cytoplasm and has no discernable changes compared to wild-type; reduces catalytic activity; dbSNP:rs142336618." evidence="3 7">
    <original>D</original>
    <variation>H</variation>
    <location>
        <position position="27"/>
    </location>
</feature>
<feature type="sequence variant" id="VAR_070144" description="In MDDGB14; causes protein aggregation; reduces catalytic activity; fails to rescue phenotype when expressed in a zebrafish disease model; dbSNP:rs397509426." evidence="3 7">
    <original>P</original>
    <variation>L</variation>
    <location>
        <position position="32"/>
    </location>
</feature>
<feature type="sequence variant" id="VAR_079761" description="In MDDGC14." evidence="4">
    <original>P</original>
    <variation>S</variation>
    <location>
        <position position="32"/>
    </location>
</feature>
<feature type="sequence variant" id="VAR_035372" description="In dbSNP:rs34345884.">
    <original>H</original>
    <variation>D</variation>
    <location>
        <position position="126"/>
    </location>
</feature>
<feature type="sequence variant" id="VAR_079762" description="In MDDGC14; dbSNP:rs145535498." evidence="4">
    <original>S</original>
    <variation>C</variation>
    <location>
        <position position="132"/>
    </location>
</feature>
<feature type="sequence variant" id="VAR_035373" description="In dbSNP:rs1466685." evidence="1 2 8">
    <original>Q</original>
    <variation>R</variation>
    <location>
        <position position="184"/>
    </location>
</feature>
<feature type="sequence variant" id="VAR_070145" description="In MDDGB14; the protein remains distributed in the cytoplasm and has no discernable changes compared to wild-type; dbSNP:rs397509425." evidence="3">
    <original>R</original>
    <variation>C</variation>
    <location>
        <position position="185"/>
    </location>
</feature>
<feature type="sequence variant" id="VAR_079763" description="In MDDGC14; reduces catalytic activity; dbSNP:rs761714818." evidence="4 7">
    <original>I</original>
    <variation>T</variation>
    <location>
        <position position="219"/>
    </location>
</feature>
<feature type="sequence variant" id="VAR_079764" description="In MDDGC14." evidence="4">
    <original>P</original>
    <variation>S</variation>
    <location>
        <position position="241"/>
    </location>
</feature>
<feature type="sequence variant" id="VAR_079765" description="In MDDGC14; dbSNP:rs875989850." evidence="4">
    <original>V</original>
    <variation>M</variation>
    <location>
        <position position="254"/>
    </location>
</feature>
<feature type="sequence variant" id="VAR_070146" description="In MDDGB14 and MDDGC14; dbSNP:rs202160208." evidence="3 4">
    <original>R</original>
    <variation>Q</variation>
    <location>
        <position position="287"/>
    </location>
</feature>
<feature type="sequence variant" id="VAR_079766" description="In MDDGC14; dbSNP:rs142908436." evidence="4 6">
    <original>R</original>
    <variation>W</variation>
    <location>
        <position position="287"/>
    </location>
</feature>
<feature type="sequence variant" id="VAR_079767" description="In MDDGC14; slight reduction in protein abundance; reduces interaction with GMPPB but not with GMPPA; dbSNP:rs756682220." evidence="5 7">
    <original>R</original>
    <variation>W</variation>
    <location>
        <position position="293"/>
    </location>
</feature>
<feature type="sequence variant" id="VAR_079768" description="In MDDGC14; dbSNP:rs559784211." evidence="4">
    <original>V</original>
    <variation>A</variation>
    <location>
        <position position="318"/>
    </location>
</feature>
<feature type="sequence variant" id="VAR_079769" description="In MDDGC14; no change in protein abundance; dbSNP:rs781114909." evidence="5">
    <original>N</original>
    <variation>K</variation>
    <location>
        <position position="322"/>
    </location>
</feature>
<feature type="sequence variant" id="VAR_070147" description="In MDDGC14; causes protein aggregation; dbSNP:rs199922550." evidence="3 4">
    <original>V</original>
    <variation>I</variation>
    <location>
        <position position="330"/>
    </location>
</feature>
<feature type="sequence variant" id="VAR_070148" description="In MDDGA14; causes protein aggregation; reduces interaction with GMPPB but not with GMPPA; dbSNP:rs397509422." evidence="3 7">
    <original>D</original>
    <variation>N</variation>
    <location>
        <position position="334"/>
    </location>
</feature>
<feature type="sequence variant" id="VAR_079770" description="In MDDGC14; slight reduction in protein abundance; shows an increased propensity to form punctate aggregates; dbSNP:rs1064796834." evidence="5">
    <original>G</original>
    <variation>R</variation>
    <location>
        <position position="340"/>
    </location>
</feature>
<feature type="sequence variant" id="VAR_079771" description="In MDDGC14; no change in protein abundance; shows an increased propensity to form punctate aggregates; reduces interaction with GMPPA but not with GMPPB; dbSNP:rs771861177." evidence="5 7">
    <original>R</original>
    <variation>H</variation>
    <location>
        <position position="357"/>
    </location>
</feature>
<feature type="mutagenesis site" description="Reduces enzymatic activity." evidence="7">
    <original>I</original>
    <variation>T</variation>
    <location>
        <position position="193"/>
    </location>
</feature>
<feature type="mutagenesis site" description="Reduces GDP-alpha-D-mannose binding affinity and inhibits catalytic activity but does not affect assembly of GMPPA-GMPPB complex. Does not rescue the knockdown phenotype in a zebrafish disease model." evidence="7">
    <original>D</original>
    <variation>A</variation>
    <location>
        <position position="218"/>
    </location>
</feature>
<feature type="mutagenesis site" description="Abrogates enzyme activity." evidence="7">
    <original>D</original>
    <variation>Q</variation>
    <location>
        <position position="218"/>
    </location>
</feature>
<feature type="mutagenesis site" description="Reduces interaction with GMPPB but not with GMPPA." evidence="7">
    <original>C</original>
    <variation>Y</variation>
    <location>
        <position position="266"/>
    </location>
</feature>
<feature type="mutagenesis site" description="Disrupts interaction with other GMPPB molecules but not with GMPPA." evidence="7">
    <original>R</original>
    <variation>E</variation>
    <location>
        <position position="287"/>
    </location>
</feature>
<feature type="mutagenesis site" description="Reduces interaction with GMPPB but not with GMPPA." evidence="7">
    <original>L</original>
    <variation>F</variation>
    <location>
        <position position="303"/>
    </location>
</feature>
<feature type="mutagenesis site" description="Disrupted interaction with GMPPA and other GMPPB molecules." evidence="7">
    <original>E</original>
    <variation>R</variation>
    <location>
        <position position="335"/>
    </location>
</feature>
<feature type="mutagenesis site" description="Does not disrupt the interaction with GMPPA or other GMPPB molecules." evidence="7">
    <original>LPHK</original>
    <variation>AAAA</variation>
    <location>
        <begin position="344"/>
        <end position="347"/>
    </location>
</feature>
<feature type="mutagenesis site" description="Reduced efficiency of allosteric inhibition by GMPPA but interaction with GMPPA or other GMPPB molecules is not disrupted." evidence="7">
    <location>
        <begin position="358"/>
        <end position="360"/>
    </location>
</feature>
<feature type="strand" evidence="18">
    <location>
        <begin position="2"/>
        <end position="6"/>
    </location>
</feature>
<feature type="helix" evidence="18">
    <location>
        <begin position="15"/>
        <end position="18"/>
    </location>
</feature>
<feature type="helix" evidence="19">
    <location>
        <begin position="23"/>
        <end position="25"/>
    </location>
</feature>
<feature type="strand" evidence="18">
    <location>
        <begin position="26"/>
        <end position="32"/>
    </location>
</feature>
<feature type="helix" evidence="18">
    <location>
        <begin position="33"/>
        <end position="40"/>
    </location>
</feature>
<feature type="turn" evidence="18">
    <location>
        <begin position="41"/>
        <end position="45"/>
    </location>
</feature>
<feature type="strand" evidence="18">
    <location>
        <begin position="48"/>
        <end position="53"/>
    </location>
</feature>
<feature type="helix" evidence="18">
    <location>
        <begin position="57"/>
        <end position="71"/>
    </location>
</feature>
<feature type="strand" evidence="18">
    <location>
        <begin position="72"/>
        <end position="79"/>
    </location>
</feature>
<feature type="turn" evidence="18">
    <location>
        <begin position="85"/>
        <end position="87"/>
    </location>
</feature>
<feature type="helix" evidence="18">
    <location>
        <begin position="88"/>
        <end position="92"/>
    </location>
</feature>
<feature type="helix" evidence="18">
    <location>
        <begin position="94"/>
        <end position="97"/>
    </location>
</feature>
<feature type="strand" evidence="18">
    <location>
        <begin position="98"/>
        <end position="100"/>
    </location>
</feature>
<feature type="strand" evidence="18">
    <location>
        <begin position="104"/>
        <end position="108"/>
    </location>
</feature>
<feature type="strand" evidence="19">
    <location>
        <begin position="111"/>
        <end position="113"/>
    </location>
</feature>
<feature type="helix" evidence="18">
    <location>
        <begin position="117"/>
        <end position="127"/>
    </location>
</feature>
<feature type="strand" evidence="18">
    <location>
        <begin position="129"/>
        <end position="137"/>
    </location>
</feature>
<feature type="strand" evidence="17">
    <location>
        <begin position="142"/>
        <end position="144"/>
    </location>
</feature>
<feature type="turn" evidence="19">
    <location>
        <begin position="151"/>
        <end position="153"/>
    </location>
</feature>
<feature type="strand" evidence="17">
    <location>
        <begin position="159"/>
        <end position="162"/>
    </location>
</feature>
<feature type="turn" evidence="18">
    <location>
        <begin position="166"/>
        <end position="168"/>
    </location>
</feature>
<feature type="strand" evidence="18">
    <location>
        <begin position="169"/>
        <end position="178"/>
    </location>
</feature>
<feature type="helix" evidence="18">
    <location>
        <begin position="180"/>
        <end position="183"/>
    </location>
</feature>
<feature type="strand" evidence="18">
    <location>
        <begin position="188"/>
        <end position="190"/>
    </location>
</feature>
<feature type="turn" evidence="18">
    <location>
        <begin position="193"/>
        <end position="196"/>
    </location>
</feature>
<feature type="helix" evidence="18">
    <location>
        <begin position="197"/>
        <end position="203"/>
    </location>
</feature>
<feature type="strand" evidence="18">
    <location>
        <begin position="207"/>
        <end position="211"/>
    </location>
</feature>
<feature type="strand" evidence="19">
    <location>
        <begin position="216"/>
        <end position="218"/>
    </location>
</feature>
<feature type="helix" evidence="18">
    <location>
        <begin position="222"/>
        <end position="239"/>
    </location>
</feature>
<feature type="turn" evidence="19">
    <location>
        <begin position="241"/>
        <end position="243"/>
    </location>
</feature>
<feature type="strand" evidence="18">
    <location>
        <begin position="248"/>
        <end position="250"/>
    </location>
</feature>
<feature type="strand" evidence="18">
    <location>
        <begin position="254"/>
        <end position="256"/>
    </location>
</feature>
<feature type="strand" evidence="18">
    <location>
        <begin position="270"/>
        <end position="274"/>
    </location>
</feature>
<feature type="strand" evidence="18">
    <location>
        <begin position="285"/>
        <end position="288"/>
    </location>
</feature>
<feature type="strand" evidence="18">
    <location>
        <begin position="302"/>
        <end position="305"/>
    </location>
</feature>
<feature type="strand" evidence="18">
    <location>
        <begin position="319"/>
        <end position="323"/>
    </location>
</feature>
<feature type="strand" evidence="18">
    <location>
        <begin position="337"/>
        <end position="340"/>
    </location>
</feature>
<proteinExistence type="evidence at protein level"/>
<protein>
    <recommendedName>
        <fullName evidence="10">Mannose-1-phosphate guanylyltransferase catalytic subunit beta</fullName>
        <ecNumber evidence="7">2.7.7.13</ecNumber>
    </recommendedName>
    <alternativeName>
        <fullName>GDP-mannose pyrophosphorylase B</fullName>
    </alternativeName>
    <alternativeName>
        <fullName>GTP-mannose-1-phosphate guanylyltransferase beta</fullName>
    </alternativeName>
</protein>
<keyword id="KW-0002">3D-structure</keyword>
<keyword id="KW-0025">Alternative splicing</keyword>
<keyword id="KW-0912">Congenital muscular dystrophy</keyword>
<keyword id="KW-0963">Cytoplasm</keyword>
<keyword id="KW-0225">Disease variant</keyword>
<keyword id="KW-1215">Dystroglycanopathy</keyword>
<keyword id="KW-0342">GTP-binding</keyword>
<keyword id="KW-0947">Limb-girdle muscular dystrophy</keyword>
<keyword id="KW-0460">Magnesium</keyword>
<keyword id="KW-0479">Metal-binding</keyword>
<keyword id="KW-0547">Nucleotide-binding</keyword>
<keyword id="KW-0548">Nucleotidyltransferase</keyword>
<keyword id="KW-1267">Proteomics identification</keyword>
<keyword id="KW-1185">Reference proteome</keyword>
<keyword id="KW-0808">Transferase</keyword>
<accession>Q9Y5P6</accession>
<accession>A8K6N5</accession>
<accession>Q9H7U3</accession>
<comment type="function">
    <text evidence="7">Catalytic subunit of the GMPPA-GMPPB mannose-1-phosphate guanylyltransferase complex (PubMed:33986552). Catalyzes the formation of GDP-mannose, an essential precursor of glycan moieties of glycoproteins and glycolipids (PubMed:33986552). Can catalyze the reverse reaction in vitro (PubMed:33986552). Together with GMPPA regulates GDP-alpha-D-mannose levels (PubMed:33986552).</text>
</comment>
<comment type="catalytic activity">
    <reaction evidence="7">
        <text>alpha-D-mannose 1-phosphate + GTP + H(+) = GDP-alpha-D-mannose + diphosphate</text>
        <dbReference type="Rhea" id="RHEA:15229"/>
        <dbReference type="ChEBI" id="CHEBI:15378"/>
        <dbReference type="ChEBI" id="CHEBI:33019"/>
        <dbReference type="ChEBI" id="CHEBI:37565"/>
        <dbReference type="ChEBI" id="CHEBI:57527"/>
        <dbReference type="ChEBI" id="CHEBI:58409"/>
        <dbReference type="EC" id="2.7.7.13"/>
    </reaction>
    <physiologicalReaction direction="left-to-right" evidence="7">
        <dbReference type="Rhea" id="RHEA:15230"/>
    </physiologicalReaction>
    <physiologicalReaction direction="right-to-left" evidence="7">
        <dbReference type="Rhea" id="RHEA:15231"/>
    </physiologicalReaction>
</comment>
<comment type="cofactor">
    <cofactor evidence="7">
        <name>Mg(2+)</name>
        <dbReference type="ChEBI" id="CHEBI:18420"/>
    </cofactor>
    <text evidence="7">Coordinates binding with substrate and required for enzymatic activity.</text>
</comment>
<comment type="activity regulation">
    <text evidence="7">Enzyme activity is reduced by incorporation into the GMPPA-GMPPB mannose-1-phosphate guanylyltransferase complex (PubMed:33986552). Allosterically inhibited, when part of the GMPPA-GMPPB complex, by GDP-alpha-D-mannose binding to GMPPA (PubMed:33986552).</text>
</comment>
<comment type="biophysicochemical properties">
    <kinetics>
        <KM evidence="7">11.45 uM for mannose-1-phosphate (at 37 degrees Celsius)</KM>
        <KM evidence="7">12.13 uM for GTP (at 37 degrees Celsius)</KM>
        <KM evidence="7">25.22 uM for GDP-mannose (at 37 degrees Celsius)</KM>
        <text evidence="7">kcat is 23.71 sec(-1) with mannose-1-phosphate as substrate (PubMed:33986552). kcat is 21.48 sec(-1) with GTP as substrate (PubMed:33986552). kcat is 10.53 sec(-1) with GDP-mannose as substrate (PubMed:33986552).</text>
    </kinetics>
</comment>
<comment type="pathway">
    <text evidence="7">Nucleotide-sugar biosynthesis; GDP-alpha-D-mannose biosynthesis; GDP-alpha-D-mannose from alpha-D-mannose 1-phosphate (GTP route): step 1/1.</text>
</comment>
<comment type="subunit">
    <text evidence="7">Component of the GMPPA-GMPPB mannose-1-phosphate guanylyltransferase complex composed of 4 GMPPA subunits and 8 GMPPB subunits; the complex is organized into three layers, a central layer made up of 2 GMPPA dimers sandwiched between two layers each made up of 2 GMPPB dimers (PubMed:33986552). GMPPB catalytic activity is reduced when part of the complex and binding of GDP-alpha-D-Mannose by GMPPA induces allosteric feedback inhibition of GMPPB (PubMed:33986552).</text>
</comment>
<comment type="interaction">
    <interactant intactId="EBI-750945">
        <id>Q9Y5P6</id>
    </interactant>
    <interactant intactId="EBI-710457">
        <id>Q7L190</id>
        <label>DPPA4</label>
    </interactant>
    <organismsDiffer>false</organismsDiffer>
    <experiments>3</experiments>
</comment>
<comment type="interaction">
    <interactant intactId="EBI-750945">
        <id>Q9Y5P6</id>
    </interactant>
    <interactant intactId="EBI-748515">
        <id>Q8IVS8</id>
        <label>GLYCTK</label>
    </interactant>
    <organismsDiffer>false</organismsDiffer>
    <experiments>5</experiments>
</comment>
<comment type="interaction">
    <interactant intactId="EBI-750945">
        <id>Q9Y5P6</id>
    </interactant>
    <interactant intactId="EBI-750953">
        <id>Q96IJ6</id>
        <label>GMPPA</label>
    </interactant>
    <organismsDiffer>false</organismsDiffer>
    <experiments>10</experiments>
</comment>
<comment type="interaction">
    <interactant intactId="EBI-750945">
        <id>Q9Y5P6</id>
    </interactant>
    <interactant intactId="EBI-1055079">
        <id>O15160</id>
        <label>POLR1C</label>
    </interactant>
    <organismsDiffer>false</organismsDiffer>
    <experiments>3</experiments>
</comment>
<comment type="interaction">
    <interactant intactId="EBI-750945">
        <id>Q9Y5P6</id>
    </interactant>
    <interactant intactId="EBI-2825190">
        <id>Q86UY0</id>
        <label>TXNDC5</label>
    </interactant>
    <organismsDiffer>false</organismsDiffer>
    <experiments>3</experiments>
</comment>
<comment type="subcellular location">
    <subcellularLocation>
        <location evidence="3">Cytoplasm</location>
    </subcellularLocation>
</comment>
<comment type="alternative products">
    <event type="alternative splicing"/>
    <isoform>
        <id>Q9Y5P6-1</id>
        <name>1</name>
        <sequence type="displayed"/>
    </isoform>
    <isoform>
        <id>Q9Y5P6-2</id>
        <name>2</name>
        <sequence type="described" ref="VSP_028619"/>
    </isoform>
</comment>
<comment type="tissue specificity">
    <molecule>Isoform 1</molecule>
    <text evidence="3">Ubiquitously expressed, including in brain and skeletal muscle.</text>
</comment>
<comment type="tissue specificity">
    <molecule>Isoform 2</molecule>
    <text evidence="3">Weakly expressed with highest expression in skeletal muscle, brain and gonads.</text>
</comment>
<comment type="developmental stage">
    <molecule>Isoform 2</molecule>
    <text evidence="3">Higher expression levels in fetal skeletal muscle and brain than in adult.</text>
</comment>
<comment type="domain">
    <text evidence="7">The N-terminal substrate-binding domain adopts a Rossman-like fold and has a binding pocket for GTP or GDP-alpha-D-mannose (PubMed:33986552). Substrate binding is coordinated by an Mg(2+) ion (PubMed:33986552).</text>
</comment>
<comment type="domain">
    <text evidence="7">The C-terminal domain consists of a series of tandem hexapeptide repeats that adopt a beta-helix conformation (PubMed:33986552). The beta-helix forms several protein interaction surfaces involved in assembly of the GMPPA-GMPPB mannose-1-phosphate guanylyltransferase complex (PubMed:33986552).</text>
</comment>
<comment type="disease" evidence="3 7">
    <disease id="DI-03846">
        <name>Muscular dystrophy-dystroglycanopathy congenital with brain and eye anomalies A14</name>
        <acronym>MDDGA14</acronym>
        <description>An autosomal recessive disorder characterized by congenital muscular dystrophy associated with brain anomalies, eye malformations, and profound intellectual disability. The disorder includes a severe form designated as Walker-Warburg syndrome and a less severe phenotype known as muscle-eye-brain disease. MDDGA14 features include increased muscle tone, microcephaly, cleft palate, feeding difficulties, severe muscle weakness, sensorineural hearing loss, cerebellar hypoplasia, ataxia, and retinal dysfunction.</description>
        <dbReference type="MIM" id="615350"/>
    </disease>
    <text>The disease is caused by variants affecting the gene represented in this entry.</text>
</comment>
<comment type="disease" evidence="3 7">
    <disease id="DI-03847">
        <name>Muscular dystrophy-dystroglycanopathy congenital with impaired intellectual development B14</name>
        <acronym>MDDGB14</acronym>
        <description>A congenital muscular dystrophy characterized by severe muscle weakness apparent in infancy and intellectual disability. Some patients may have additional features, such as microcephaly, cardiac dysfunction, seizures, or cerebellar hypoplasia.</description>
        <dbReference type="MIM" id="615351"/>
    </disease>
    <text>The disease is caused by variants affecting the gene represented in this entry.</text>
</comment>
<comment type="disease" evidence="3 4 5 6 7">
    <disease id="DI-03848">
        <name>Muscular dystrophy-dystroglycanopathy limb-girdle C14</name>
        <acronym>MDDGC14</acronym>
        <description>An autosomal recessive form of muscular dystrophy characterized by mild proximal muscle weakness with onset in early childhood. Some patients may have additional features, such as mild intellectual disability or seizures.</description>
        <dbReference type="MIM" id="615352"/>
    </disease>
    <text>The disease is caused by variants affecting the gene represented in this entry.</text>
</comment>
<comment type="similarity">
    <text evidence="11">Belongs to the transferase hexapeptide repeat family.</text>
</comment>